<accession>B0BVR3</accession>
<protein>
    <recommendedName>
        <fullName evidence="1">Acyl-[acyl-carrier-protein]--UDP-N-acetylglucosamine O-acyltransferase</fullName>
        <shortName evidence="1">UDP-N-acetylglucosamine acyltransferase</shortName>
        <ecNumber evidence="1">2.3.1.129</ecNumber>
    </recommendedName>
</protein>
<sequence>MSNSNIHTTAVIAEGAKLGKNVKIGPYCIIGPEVVLNDNVELKSHVVIEGITEIGENTVIYPFASIGQPPQILKYANERSSTIIGSNNTIREYVTVQAGSQGGGMMTRVGNNNLFMVGVHIGHDCKIGNNVVFANYVSLAGHIGVGDYAIIGGLSAVHQYARIGEYSMIGGLSPVGADVIPFGLVSSKRAVLEGLNLIGMNRKGFDKVKSLSALKAIEEIFSGEGNFAERIKQVAEKYNNNSIVIQIIDFLNQDSSRAFCRFEK</sequence>
<dbReference type="EC" id="2.3.1.129" evidence="1"/>
<dbReference type="EMBL" id="CP000766">
    <property type="protein sequence ID" value="ABY71939.1"/>
    <property type="molecule type" value="Genomic_DNA"/>
</dbReference>
<dbReference type="RefSeq" id="WP_012150231.1">
    <property type="nucleotide sequence ID" value="NC_010263.3"/>
</dbReference>
<dbReference type="SMR" id="B0BVR3"/>
<dbReference type="GeneID" id="79936820"/>
<dbReference type="KEGG" id="rrj:RrIowa_0007"/>
<dbReference type="eggNOG" id="COG1043">
    <property type="taxonomic scope" value="Bacteria"/>
</dbReference>
<dbReference type="HOGENOM" id="CLU_061249_0_0_5"/>
<dbReference type="UniPathway" id="UPA00359">
    <property type="reaction ID" value="UER00477"/>
</dbReference>
<dbReference type="Proteomes" id="UP000000796">
    <property type="component" value="Chromosome"/>
</dbReference>
<dbReference type="GO" id="GO:0005737">
    <property type="term" value="C:cytoplasm"/>
    <property type="evidence" value="ECO:0007669"/>
    <property type="project" value="UniProtKB-SubCell"/>
</dbReference>
<dbReference type="GO" id="GO:0016020">
    <property type="term" value="C:membrane"/>
    <property type="evidence" value="ECO:0007669"/>
    <property type="project" value="GOC"/>
</dbReference>
<dbReference type="GO" id="GO:0008780">
    <property type="term" value="F:acyl-[acyl-carrier-protein]-UDP-N-acetylglucosamine O-acyltransferase activity"/>
    <property type="evidence" value="ECO:0007669"/>
    <property type="project" value="UniProtKB-UniRule"/>
</dbReference>
<dbReference type="GO" id="GO:0009245">
    <property type="term" value="P:lipid A biosynthetic process"/>
    <property type="evidence" value="ECO:0007669"/>
    <property type="project" value="UniProtKB-UniRule"/>
</dbReference>
<dbReference type="CDD" id="cd03351">
    <property type="entry name" value="LbH_UDP-GlcNAc_AT"/>
    <property type="match status" value="1"/>
</dbReference>
<dbReference type="Gene3D" id="2.160.10.10">
    <property type="entry name" value="Hexapeptide repeat proteins"/>
    <property type="match status" value="1"/>
</dbReference>
<dbReference type="Gene3D" id="1.20.1180.10">
    <property type="entry name" value="Udp N-acetylglucosamine O-acyltransferase, C-terminal domain"/>
    <property type="match status" value="1"/>
</dbReference>
<dbReference type="HAMAP" id="MF_00387">
    <property type="entry name" value="LpxA"/>
    <property type="match status" value="1"/>
</dbReference>
<dbReference type="InterPro" id="IPR029098">
    <property type="entry name" value="Acetyltransf_C"/>
</dbReference>
<dbReference type="InterPro" id="IPR037157">
    <property type="entry name" value="Acetyltransf_C_sf"/>
</dbReference>
<dbReference type="InterPro" id="IPR001451">
    <property type="entry name" value="Hexapep"/>
</dbReference>
<dbReference type="InterPro" id="IPR018357">
    <property type="entry name" value="Hexapep_transf_CS"/>
</dbReference>
<dbReference type="InterPro" id="IPR010137">
    <property type="entry name" value="Lipid_A_LpxA"/>
</dbReference>
<dbReference type="InterPro" id="IPR011004">
    <property type="entry name" value="Trimer_LpxA-like_sf"/>
</dbReference>
<dbReference type="NCBIfam" id="TIGR01852">
    <property type="entry name" value="lipid_A_lpxA"/>
    <property type="match status" value="1"/>
</dbReference>
<dbReference type="NCBIfam" id="NF003657">
    <property type="entry name" value="PRK05289.1"/>
    <property type="match status" value="1"/>
</dbReference>
<dbReference type="PANTHER" id="PTHR43480">
    <property type="entry name" value="ACYL-[ACYL-CARRIER-PROTEIN]--UDP-N-ACETYLGLUCOSAMINE O-ACYLTRANSFERASE"/>
    <property type="match status" value="1"/>
</dbReference>
<dbReference type="PANTHER" id="PTHR43480:SF1">
    <property type="entry name" value="ACYL-[ACYL-CARRIER-PROTEIN]--UDP-N-ACETYLGLUCOSAMINE O-ACYLTRANSFERASE, MITOCHONDRIAL-RELATED"/>
    <property type="match status" value="1"/>
</dbReference>
<dbReference type="Pfam" id="PF13720">
    <property type="entry name" value="Acetyltransf_11"/>
    <property type="match status" value="1"/>
</dbReference>
<dbReference type="Pfam" id="PF00132">
    <property type="entry name" value="Hexapep"/>
    <property type="match status" value="2"/>
</dbReference>
<dbReference type="PIRSF" id="PIRSF000456">
    <property type="entry name" value="UDP-GlcNAc_acltr"/>
    <property type="match status" value="1"/>
</dbReference>
<dbReference type="SUPFAM" id="SSF51161">
    <property type="entry name" value="Trimeric LpxA-like enzymes"/>
    <property type="match status" value="1"/>
</dbReference>
<dbReference type="PROSITE" id="PS00101">
    <property type="entry name" value="HEXAPEP_TRANSFERASES"/>
    <property type="match status" value="1"/>
</dbReference>
<feature type="chain" id="PRO_1000080212" description="Acyl-[acyl-carrier-protein]--UDP-N-acetylglucosamine O-acyltransferase">
    <location>
        <begin position="1"/>
        <end position="264"/>
    </location>
</feature>
<keyword id="KW-0012">Acyltransferase</keyword>
<keyword id="KW-0963">Cytoplasm</keyword>
<keyword id="KW-0441">Lipid A biosynthesis</keyword>
<keyword id="KW-0444">Lipid biosynthesis</keyword>
<keyword id="KW-0443">Lipid metabolism</keyword>
<keyword id="KW-0677">Repeat</keyword>
<keyword id="KW-0808">Transferase</keyword>
<organism>
    <name type="scientific">Rickettsia rickettsii (strain Iowa)</name>
    <dbReference type="NCBI Taxonomy" id="452659"/>
    <lineage>
        <taxon>Bacteria</taxon>
        <taxon>Pseudomonadati</taxon>
        <taxon>Pseudomonadota</taxon>
        <taxon>Alphaproteobacteria</taxon>
        <taxon>Rickettsiales</taxon>
        <taxon>Rickettsiaceae</taxon>
        <taxon>Rickettsieae</taxon>
        <taxon>Rickettsia</taxon>
        <taxon>spotted fever group</taxon>
    </lineage>
</organism>
<reference key="1">
    <citation type="journal article" date="2008" name="Infect. Immun.">
        <title>Genomic comparison of virulent Rickettsia rickettsii Sheila Smith and avirulent Rickettsia rickettsii Iowa.</title>
        <authorList>
            <person name="Ellison D.W."/>
            <person name="Clark T.R."/>
            <person name="Sturdevant D.E."/>
            <person name="Virtaneva K."/>
            <person name="Porcella S.F."/>
            <person name="Hackstadt T."/>
        </authorList>
    </citation>
    <scope>NUCLEOTIDE SEQUENCE [LARGE SCALE GENOMIC DNA]</scope>
    <source>
        <strain>Iowa</strain>
    </source>
</reference>
<name>LPXA_RICRO</name>
<gene>
    <name evidence="1" type="primary">lpxA</name>
    <name type="ordered locus">RrIowa_0007</name>
</gene>
<comment type="function">
    <text evidence="1">Involved in the biosynthesis of lipid A, a phosphorylated glycolipid that anchors the lipopolysaccharide to the outer membrane of the cell.</text>
</comment>
<comment type="catalytic activity">
    <reaction evidence="1">
        <text>a (3R)-hydroxyacyl-[ACP] + UDP-N-acetyl-alpha-D-glucosamine = a UDP-3-O-[(3R)-3-hydroxyacyl]-N-acetyl-alpha-D-glucosamine + holo-[ACP]</text>
        <dbReference type="Rhea" id="RHEA:67812"/>
        <dbReference type="Rhea" id="RHEA-COMP:9685"/>
        <dbReference type="Rhea" id="RHEA-COMP:9945"/>
        <dbReference type="ChEBI" id="CHEBI:57705"/>
        <dbReference type="ChEBI" id="CHEBI:64479"/>
        <dbReference type="ChEBI" id="CHEBI:78827"/>
        <dbReference type="ChEBI" id="CHEBI:173225"/>
        <dbReference type="EC" id="2.3.1.129"/>
    </reaction>
</comment>
<comment type="pathway">
    <text evidence="1">Glycolipid biosynthesis; lipid IV(A) biosynthesis; lipid IV(A) from (3R)-3-hydroxytetradecanoyl-[acyl-carrier-protein] and UDP-N-acetyl-alpha-D-glucosamine: step 1/6.</text>
</comment>
<comment type="subunit">
    <text evidence="1">Homotrimer.</text>
</comment>
<comment type="subcellular location">
    <subcellularLocation>
        <location evidence="1">Cytoplasm</location>
    </subcellularLocation>
</comment>
<comment type="similarity">
    <text evidence="1">Belongs to the transferase hexapeptide repeat family. LpxA subfamily.</text>
</comment>
<evidence type="ECO:0000255" key="1">
    <source>
        <dbReference type="HAMAP-Rule" id="MF_00387"/>
    </source>
</evidence>
<proteinExistence type="inferred from homology"/>